<accession>A1DM87</accession>
<organism>
    <name type="scientific">Neosartorya fischeri (strain ATCC 1020 / DSM 3700 / CBS 544.65 / FGSC A1164 / JCM 1740 / NRRL 181 / WB 181)</name>
    <name type="common">Aspergillus fischerianus</name>
    <dbReference type="NCBI Taxonomy" id="331117"/>
    <lineage>
        <taxon>Eukaryota</taxon>
        <taxon>Fungi</taxon>
        <taxon>Dikarya</taxon>
        <taxon>Ascomycota</taxon>
        <taxon>Pezizomycotina</taxon>
        <taxon>Eurotiomycetes</taxon>
        <taxon>Eurotiomycetidae</taxon>
        <taxon>Eurotiales</taxon>
        <taxon>Aspergillaceae</taxon>
        <taxon>Aspergillus</taxon>
        <taxon>Aspergillus subgen. Fumigati</taxon>
    </lineage>
</organism>
<reference key="1">
    <citation type="journal article" date="2008" name="PLoS Genet.">
        <title>Genomic islands in the pathogenic filamentous fungus Aspergillus fumigatus.</title>
        <authorList>
            <person name="Fedorova N.D."/>
            <person name="Khaldi N."/>
            <person name="Joardar V.S."/>
            <person name="Maiti R."/>
            <person name="Amedeo P."/>
            <person name="Anderson M.J."/>
            <person name="Crabtree J."/>
            <person name="Silva J.C."/>
            <person name="Badger J.H."/>
            <person name="Albarraq A."/>
            <person name="Angiuoli S."/>
            <person name="Bussey H."/>
            <person name="Bowyer P."/>
            <person name="Cotty P.J."/>
            <person name="Dyer P.S."/>
            <person name="Egan A."/>
            <person name="Galens K."/>
            <person name="Fraser-Liggett C.M."/>
            <person name="Haas B.J."/>
            <person name="Inman J.M."/>
            <person name="Kent R."/>
            <person name="Lemieux S."/>
            <person name="Malavazi I."/>
            <person name="Orvis J."/>
            <person name="Roemer T."/>
            <person name="Ronning C.M."/>
            <person name="Sundaram J.P."/>
            <person name="Sutton G."/>
            <person name="Turner G."/>
            <person name="Venter J.C."/>
            <person name="White O.R."/>
            <person name="Whitty B.R."/>
            <person name="Youngman P."/>
            <person name="Wolfe K.H."/>
            <person name="Goldman G.H."/>
            <person name="Wortman J.R."/>
            <person name="Jiang B."/>
            <person name="Denning D.W."/>
            <person name="Nierman W.C."/>
        </authorList>
    </citation>
    <scope>NUCLEOTIDE SEQUENCE [LARGE SCALE GENOMIC DNA]</scope>
    <source>
        <strain>ATCC 1020 / DSM 3700 / CBS 544.65 / FGSC A1164 / JCM 1740 / NRRL 181 / WB 181</strain>
    </source>
</reference>
<dbReference type="EMBL" id="DS027698">
    <property type="protein sequence ID" value="EAW15908.1"/>
    <property type="molecule type" value="Genomic_DNA"/>
</dbReference>
<dbReference type="RefSeq" id="XP_001257805.1">
    <property type="nucleotide sequence ID" value="XM_001257804.1"/>
</dbReference>
<dbReference type="SMR" id="A1DM87"/>
<dbReference type="STRING" id="331117.A1DM87"/>
<dbReference type="EnsemblFungi" id="EAW15908">
    <property type="protein sequence ID" value="EAW15908"/>
    <property type="gene ID" value="NFIA_052530"/>
</dbReference>
<dbReference type="GeneID" id="4584320"/>
<dbReference type="KEGG" id="nfi:NFIA_052530"/>
<dbReference type="VEuPathDB" id="FungiDB:NFIA_052530"/>
<dbReference type="eggNOG" id="ENOG502R9PE">
    <property type="taxonomic scope" value="Eukaryota"/>
</dbReference>
<dbReference type="HOGENOM" id="CLU_033828_0_0_1"/>
<dbReference type="OMA" id="AMPEAHR"/>
<dbReference type="OrthoDB" id="75754at2759"/>
<dbReference type="Proteomes" id="UP000006702">
    <property type="component" value="Unassembled WGS sequence"/>
</dbReference>
<dbReference type="GO" id="GO:0005694">
    <property type="term" value="C:chromosome"/>
    <property type="evidence" value="ECO:0007669"/>
    <property type="project" value="UniProtKB-SubCell"/>
</dbReference>
<dbReference type="GO" id="GO:0005634">
    <property type="term" value="C:nucleus"/>
    <property type="evidence" value="ECO:0007669"/>
    <property type="project" value="UniProtKB-SubCell"/>
</dbReference>
<dbReference type="GO" id="GO:0003677">
    <property type="term" value="F:DNA binding"/>
    <property type="evidence" value="ECO:0007669"/>
    <property type="project" value="UniProtKB-KW"/>
</dbReference>
<dbReference type="GO" id="GO:0042393">
    <property type="term" value="F:histone binding"/>
    <property type="evidence" value="ECO:0007669"/>
    <property type="project" value="TreeGrafter"/>
</dbReference>
<dbReference type="GO" id="GO:0031491">
    <property type="term" value="F:nucleosome binding"/>
    <property type="evidence" value="ECO:0007669"/>
    <property type="project" value="TreeGrafter"/>
</dbReference>
<dbReference type="Gene3D" id="2.30.29.120">
    <property type="match status" value="1"/>
</dbReference>
<dbReference type="Gene3D" id="2.30.29.30">
    <property type="entry name" value="Pleckstrin-homology domain (PH domain)/Phosphotyrosine-binding domain (PTB)"/>
    <property type="match status" value="1"/>
</dbReference>
<dbReference type="InterPro" id="IPR011993">
    <property type="entry name" value="PH-like_dom_sf"/>
</dbReference>
<dbReference type="InterPro" id="IPR013719">
    <property type="entry name" value="RTT106/SPT16-like_middle_dom"/>
</dbReference>
<dbReference type="InterPro" id="IPR050454">
    <property type="entry name" value="RTT106/SSRP1_HistChap/FACT"/>
</dbReference>
<dbReference type="PANTHER" id="PTHR45849">
    <property type="entry name" value="FACT COMPLEX SUBUNIT SSRP1"/>
    <property type="match status" value="1"/>
</dbReference>
<dbReference type="PANTHER" id="PTHR45849:SF3">
    <property type="entry name" value="HISTONE CHAPERONE RTT106"/>
    <property type="match status" value="1"/>
</dbReference>
<dbReference type="Pfam" id="PF08512">
    <property type="entry name" value="Rttp106-like_middle"/>
    <property type="match status" value="1"/>
</dbReference>
<dbReference type="SMART" id="SM01287">
    <property type="entry name" value="Rtt106"/>
    <property type="match status" value="1"/>
</dbReference>
<dbReference type="SUPFAM" id="SSF50729">
    <property type="entry name" value="PH domain-like"/>
    <property type="match status" value="1"/>
</dbReference>
<feature type="chain" id="PRO_0000320496" description="Histone chaperone rtt106">
    <location>
        <begin position="1"/>
        <end position="459"/>
    </location>
</feature>
<feature type="region of interest" description="Disordered" evidence="2">
    <location>
        <begin position="64"/>
        <end position="96"/>
    </location>
</feature>
<feature type="region of interest" description="Disordered" evidence="2">
    <location>
        <begin position="370"/>
        <end position="459"/>
    </location>
</feature>
<feature type="compositionally biased region" description="Polar residues" evidence="2">
    <location>
        <begin position="85"/>
        <end position="96"/>
    </location>
</feature>
<feature type="compositionally biased region" description="Acidic residues" evidence="2">
    <location>
        <begin position="398"/>
        <end position="416"/>
    </location>
</feature>
<feature type="compositionally biased region" description="Acidic residues" evidence="2">
    <location>
        <begin position="424"/>
        <end position="440"/>
    </location>
</feature>
<feature type="compositionally biased region" description="Acidic residues" evidence="2">
    <location>
        <begin position="449"/>
        <end position="459"/>
    </location>
</feature>
<evidence type="ECO:0000250" key="1"/>
<evidence type="ECO:0000256" key="2">
    <source>
        <dbReference type="SAM" id="MobiDB-lite"/>
    </source>
</evidence>
<evidence type="ECO:0000305" key="3"/>
<keyword id="KW-0143">Chaperone</keyword>
<keyword id="KW-0158">Chromosome</keyword>
<keyword id="KW-0238">DNA-binding</keyword>
<keyword id="KW-0539">Nucleus</keyword>
<keyword id="KW-1185">Reference proteome</keyword>
<keyword id="KW-0804">Transcription</keyword>
<keyword id="KW-0805">Transcription regulation</keyword>
<gene>
    <name type="primary">rtt106</name>
    <name type="ORF">NFIA_052530</name>
</gene>
<name>RT106_NEOFI</name>
<sequence>MSFATINRSATKALSASIPAIEDAFAAEPSLKKRVYDAIESTPQHVPLFEDIAKYTSSLLARHANPPTQPVEADEGPAAKKRKLQNGNVAGDTQSSGDVKAEAPLQFYMQDVSFAIPQRKKLTLEVTAGRGYLRARNQTSKEVEFGVPMDRIRHVLCLPVPEKSQRQFNFCIIPQYSDGINPPPEGEQVFESMVWTVSDGPAKAAFSGNGQQVGTGDGETAEALVRRVLNENLSHTKVVRPDERQFVSAMPEAHRKAEKAYHVKAFRGSKEGYLFFLSTGIFFGFKKPLIFFAFENIESVSYTSVLQRTFNLNIAVRPHNGDENETQEFELSMIDQADYAGIDAYIKKHGLQDASLAEARRAKRYNINGAKAEEDAAGTASDNAAEESELQKAQRELEDQEDEDEEDYDPGSDGESDGSGSSSEEGEDGDEEGDEDDEGQDLVAAELGSEAEDVAEDEL</sequence>
<proteinExistence type="inferred from homology"/>
<comment type="function">
    <text evidence="1">Histones H3 and H4 chaperone involved in the nucleosome formation and heterochromatin silencing. Required for the deposition of H3K56ac-carrying H3-H4 complex onto newly-replicated DNA. Plays a role in the transcriptional regulation of the cell-cycle dependent histone genes by creating a repressive structure at the core histone gene promoter (By similarity).</text>
</comment>
<comment type="subunit">
    <text evidence="1">Interacts with histones H3 and H4.</text>
</comment>
<comment type="subcellular location">
    <subcellularLocation>
        <location evidence="1">Nucleus</location>
    </subcellularLocation>
    <subcellularLocation>
        <location evidence="1">Chromosome</location>
    </subcellularLocation>
</comment>
<comment type="similarity">
    <text evidence="3">Belongs to the RTT106 family.</text>
</comment>
<protein>
    <recommendedName>
        <fullName>Histone chaperone rtt106</fullName>
    </recommendedName>
</protein>